<proteinExistence type="evidence at transcript level"/>
<gene>
    <name evidence="4" type="primary">ELP3</name>
    <name type="ORF">RCJMB04_33o1</name>
</gene>
<name>ELP3_CHICK</name>
<protein>
    <recommendedName>
        <fullName evidence="4">Elongator complex protein 3</fullName>
        <ecNumber evidence="2">2.3.1.311</ecNumber>
    </recommendedName>
    <alternativeName>
        <fullName evidence="7">tRNA uridine(34) acetyltransferase</fullName>
    </alternativeName>
</protein>
<evidence type="ECO:0000250" key="1">
    <source>
        <dbReference type="UniProtKB" id="A0A1C7D1B7"/>
    </source>
</evidence>
<evidence type="ECO:0000250" key="2">
    <source>
        <dbReference type="UniProtKB" id="D5VRB9"/>
    </source>
</evidence>
<evidence type="ECO:0000250" key="3">
    <source>
        <dbReference type="UniProtKB" id="Q02908"/>
    </source>
</evidence>
<evidence type="ECO:0000250" key="4">
    <source>
        <dbReference type="UniProtKB" id="Q9H9T3"/>
    </source>
</evidence>
<evidence type="ECO:0000255" key="5">
    <source>
        <dbReference type="PROSITE-ProRule" id="PRU00532"/>
    </source>
</evidence>
<evidence type="ECO:0000255" key="6">
    <source>
        <dbReference type="PROSITE-ProRule" id="PRU01266"/>
    </source>
</evidence>
<evidence type="ECO:0000305" key="7"/>
<comment type="function">
    <text evidence="2 4">Catalytic tRNA acetyltransferase subunit of the elongator complex which is required for multiple tRNA modifications, including mcm5U (5-methoxycarbonylmethyl uridine), mcm5s2U (5-methoxycarbonylmethyl-2-thiouridine), and ncm5U (5-carbamoylmethyl uridine) (By similarity). In the elongator complex, acts as a tRNA uridine(34) acetyltransferase by mediating formation of carboxymethyluridine in the wobble base at position 34 in tRNAs (By similarity).</text>
</comment>
<comment type="catalytic activity">
    <reaction evidence="2">
        <text>uridine(34) in tRNA + acetyl-CoA + S-adenosyl-L-methionine + H2O = 5-(carboxymethyl)uridine(34) in tRNA + 5'-deoxyadenosine + L-methionine + CoA + 2 H(+)</text>
        <dbReference type="Rhea" id="RHEA:61020"/>
        <dbReference type="Rhea" id="RHEA-COMP:10407"/>
        <dbReference type="Rhea" id="RHEA-COMP:11727"/>
        <dbReference type="ChEBI" id="CHEBI:15377"/>
        <dbReference type="ChEBI" id="CHEBI:15378"/>
        <dbReference type="ChEBI" id="CHEBI:17319"/>
        <dbReference type="ChEBI" id="CHEBI:57287"/>
        <dbReference type="ChEBI" id="CHEBI:57288"/>
        <dbReference type="ChEBI" id="CHEBI:57844"/>
        <dbReference type="ChEBI" id="CHEBI:59789"/>
        <dbReference type="ChEBI" id="CHEBI:65315"/>
        <dbReference type="ChEBI" id="CHEBI:74882"/>
        <dbReference type="EC" id="2.3.1.311"/>
    </reaction>
    <physiologicalReaction direction="left-to-right" evidence="2">
        <dbReference type="Rhea" id="RHEA:61021"/>
    </physiologicalReaction>
</comment>
<comment type="cofactor">
    <cofactor evidence="3">
        <name>[4Fe-4S] cluster</name>
        <dbReference type="ChEBI" id="CHEBI:49883"/>
    </cofactor>
    <text evidence="3">Binds 1 [4Fe-4S] cluster. The cluster is coordinated with 3 cysteines and an exchangeable S-adenosyl-L-methionine.</text>
</comment>
<comment type="pathway">
    <text evidence="4">tRNA modification; 5-methoxycarbonylmethyl-2-thiouridine-tRNA biosynthesis.</text>
</comment>
<comment type="subunit">
    <text evidence="4">Component of the elongator complex.</text>
</comment>
<comment type="subcellular location">
    <subcellularLocation>
        <location evidence="4">Cytoplasm</location>
    </subcellularLocation>
    <subcellularLocation>
        <location evidence="4">Nucleus</location>
    </subcellularLocation>
</comment>
<comment type="similarity">
    <text evidence="7">Belongs to the ELP3 family.</text>
</comment>
<comment type="caution">
    <text evidence="4">The elongator complex was originally thought to play a role in transcription elongation. However, it is no longer thought to play a direct role in this process and its primary function is thought to be in tRNA modification.</text>
</comment>
<feature type="chain" id="PRO_0000283988" description="Elongator complex protein 3">
    <location>
        <begin position="1"/>
        <end position="546"/>
    </location>
</feature>
<feature type="domain" description="Radical SAM core" evidence="6">
    <location>
        <begin position="81"/>
        <end position="371"/>
    </location>
</feature>
<feature type="domain" description="N-acetyltransferase" evidence="5">
    <location>
        <begin position="395"/>
        <end position="546"/>
    </location>
</feature>
<feature type="binding site" evidence="3">
    <location>
        <position position="98"/>
    </location>
    <ligand>
        <name>[4Fe-4S] cluster</name>
        <dbReference type="ChEBI" id="CHEBI:49883"/>
        <note>4Fe-4S-S-AdoMet</note>
    </ligand>
</feature>
<feature type="binding site" evidence="3">
    <location>
        <position position="108"/>
    </location>
    <ligand>
        <name>[4Fe-4S] cluster</name>
        <dbReference type="ChEBI" id="CHEBI:49883"/>
        <note>4Fe-4S-S-AdoMet</note>
    </ligand>
</feature>
<feature type="binding site" evidence="3">
    <location>
        <position position="111"/>
    </location>
    <ligand>
        <name>[4Fe-4S] cluster</name>
        <dbReference type="ChEBI" id="CHEBI:49883"/>
        <note>4Fe-4S-S-AdoMet</note>
    </ligand>
</feature>
<feature type="binding site" evidence="1">
    <location>
        <position position="163"/>
    </location>
    <ligand>
        <name>acetyl-CoA</name>
        <dbReference type="ChEBI" id="CHEBI:57288"/>
    </ligand>
</feature>
<feature type="binding site" evidence="1">
    <location>
        <begin position="473"/>
        <end position="476"/>
    </location>
    <ligand>
        <name>acetyl-CoA</name>
        <dbReference type="ChEBI" id="CHEBI:57288"/>
    </ligand>
</feature>
<feature type="binding site" evidence="1">
    <location>
        <begin position="496"/>
        <end position="498"/>
    </location>
    <ligand>
        <name>acetyl-CoA</name>
        <dbReference type="ChEBI" id="CHEBI:57288"/>
    </ligand>
</feature>
<feature type="binding site" evidence="1">
    <location>
        <position position="529"/>
    </location>
    <ligand>
        <name>acetyl-CoA</name>
        <dbReference type="ChEBI" id="CHEBI:57288"/>
    </ligand>
</feature>
<organism>
    <name type="scientific">Gallus gallus</name>
    <name type="common">Chicken</name>
    <dbReference type="NCBI Taxonomy" id="9031"/>
    <lineage>
        <taxon>Eukaryota</taxon>
        <taxon>Metazoa</taxon>
        <taxon>Chordata</taxon>
        <taxon>Craniata</taxon>
        <taxon>Vertebrata</taxon>
        <taxon>Euteleostomi</taxon>
        <taxon>Archelosauria</taxon>
        <taxon>Archosauria</taxon>
        <taxon>Dinosauria</taxon>
        <taxon>Saurischia</taxon>
        <taxon>Theropoda</taxon>
        <taxon>Coelurosauria</taxon>
        <taxon>Aves</taxon>
        <taxon>Neognathae</taxon>
        <taxon>Galloanserae</taxon>
        <taxon>Galliformes</taxon>
        <taxon>Phasianidae</taxon>
        <taxon>Phasianinae</taxon>
        <taxon>Gallus</taxon>
    </lineage>
</organism>
<sequence>MGQKRKDLSHAELMMMTIADIIKQLIEAHEQGKDVNLNKLKTKTSAKYGLSAQPRLVDIIAAVPPQHRKALVPKLKAKPIRTASGIAVVAVMCKPHRCPHINFTGNICVYCPGGPDSDFEYSTQSYTGYEPTSMRAIRARYDPYLQTRHRVEQLKQLGHSVDKVEFIVMGGTFMALPEDYRDYFIRNLHDALSGHTSNNVAEAVKYSERSLTKCVGITIETRPDYCLKRHLSDMLSYGCTRLEIGVQSVYEDVARDTNRGHTVKAVCESFHLAKDAGFKVVAHMMPDLPNMGLERDTDQFVEFFENPAFRPDGMKLYPTLVIRGTGLYELWKTGRYKSYPPSTLVDLVARILALVPPWTRVYRVQRDIPMPLVSSGVEHGNLRELALARMKDLGTQCRDVRTREVGIQEIHHKVRPYQIELIRRDYVANGGWETFLSYEDPEQDILVGLLRLRKCSEESFRPELKGGVSIVRELHVYGSVVPVSSRDPSKFQHQGFGMLLMEEAERIAKEEHGSWKIAVISGVGTRNYYRKIGYELEGPYMVKRLQ</sequence>
<reference key="1">
    <citation type="journal article" date="2005" name="Genome Biol.">
        <title>Full-length cDNAs from chicken bursal lymphocytes to facilitate gene function analysis.</title>
        <authorList>
            <person name="Caldwell R.B."/>
            <person name="Kierzek A.M."/>
            <person name="Arakawa H."/>
            <person name="Bezzubov Y."/>
            <person name="Zaim J."/>
            <person name="Fiedler P."/>
            <person name="Kutter S."/>
            <person name="Blagodatski A."/>
            <person name="Kostovska D."/>
            <person name="Koter M."/>
            <person name="Plachy J."/>
            <person name="Carninci P."/>
            <person name="Hayashizaki Y."/>
            <person name="Buerstedde J.-M."/>
        </authorList>
    </citation>
    <scope>NUCLEOTIDE SEQUENCE [LARGE SCALE MRNA]</scope>
    <source>
        <strain>CB</strain>
        <tissue>Bursa of Fabricius</tissue>
    </source>
</reference>
<dbReference type="EC" id="2.3.1.311" evidence="2"/>
<dbReference type="EMBL" id="AJ721063">
    <property type="protein sequence ID" value="CAG32722.1"/>
    <property type="molecule type" value="mRNA"/>
</dbReference>
<dbReference type="RefSeq" id="NP_001034382.1">
    <property type="nucleotide sequence ID" value="NM_001039293.2"/>
</dbReference>
<dbReference type="SMR" id="Q5ZHS1"/>
<dbReference type="FunCoup" id="Q5ZHS1">
    <property type="interactions" value="2460"/>
</dbReference>
<dbReference type="STRING" id="9031.ENSGALP00000026781"/>
<dbReference type="PaxDb" id="9031-ENSGALP00000026781"/>
<dbReference type="Ensembl" id="ENSGALT00010026050.1">
    <property type="protein sequence ID" value="ENSGALP00010014690.1"/>
    <property type="gene ID" value="ENSGALG00010010880.1"/>
</dbReference>
<dbReference type="GeneID" id="422021"/>
<dbReference type="KEGG" id="gga:422021"/>
<dbReference type="CTD" id="55140"/>
<dbReference type="VEuPathDB" id="HostDB:geneid_422021"/>
<dbReference type="eggNOG" id="KOG2535">
    <property type="taxonomic scope" value="Eukaryota"/>
</dbReference>
<dbReference type="GeneTree" id="ENSGT00390000013141"/>
<dbReference type="HOGENOM" id="CLU_025983_2_1_1"/>
<dbReference type="InParanoid" id="Q5ZHS1"/>
<dbReference type="OMA" id="TFETRPD"/>
<dbReference type="OrthoDB" id="10265243at2759"/>
<dbReference type="PhylomeDB" id="Q5ZHS1"/>
<dbReference type="UniPathway" id="UPA00988"/>
<dbReference type="PRO" id="PR:Q5ZHS1"/>
<dbReference type="Proteomes" id="UP000000539">
    <property type="component" value="Chromosome 3"/>
</dbReference>
<dbReference type="Bgee" id="ENSGALG00000016624">
    <property type="expression patterns" value="Expressed in muscle tissue and 13 other cell types or tissues"/>
</dbReference>
<dbReference type="GO" id="GO:0005737">
    <property type="term" value="C:cytoplasm"/>
    <property type="evidence" value="ECO:0000250"/>
    <property type="project" value="UniProtKB"/>
</dbReference>
<dbReference type="GO" id="GO:0033588">
    <property type="term" value="C:elongator holoenzyme complex"/>
    <property type="evidence" value="ECO:0000318"/>
    <property type="project" value="GO_Central"/>
</dbReference>
<dbReference type="GO" id="GO:0005634">
    <property type="term" value="C:nucleus"/>
    <property type="evidence" value="ECO:0000318"/>
    <property type="project" value="GO_Central"/>
</dbReference>
<dbReference type="GO" id="GO:0051539">
    <property type="term" value="F:4 iron, 4 sulfur cluster binding"/>
    <property type="evidence" value="ECO:0007669"/>
    <property type="project" value="UniProtKB-KW"/>
</dbReference>
<dbReference type="GO" id="GO:0046872">
    <property type="term" value="F:metal ion binding"/>
    <property type="evidence" value="ECO:0007669"/>
    <property type="project" value="UniProtKB-KW"/>
</dbReference>
<dbReference type="GO" id="GO:0008607">
    <property type="term" value="F:phosphorylase kinase regulator activity"/>
    <property type="evidence" value="ECO:0000250"/>
    <property type="project" value="UniProtKB"/>
</dbReference>
<dbReference type="GO" id="GO:0000049">
    <property type="term" value="F:tRNA binding"/>
    <property type="evidence" value="ECO:0007669"/>
    <property type="project" value="UniProtKB-KW"/>
</dbReference>
<dbReference type="GO" id="GO:0106261">
    <property type="term" value="F:tRNA uridine(34) acetyltransferase activity"/>
    <property type="evidence" value="ECO:0000250"/>
    <property type="project" value="UniProtKB"/>
</dbReference>
<dbReference type="GO" id="GO:0006357">
    <property type="term" value="P:regulation of transcription by RNA polymerase II"/>
    <property type="evidence" value="ECO:0000250"/>
    <property type="project" value="UniProtKB"/>
</dbReference>
<dbReference type="GO" id="GO:0002926">
    <property type="term" value="P:tRNA wobble base 5-methoxycarbonylmethyl-2-thiouridinylation"/>
    <property type="evidence" value="ECO:0000318"/>
    <property type="project" value="GO_Central"/>
</dbReference>
<dbReference type="GO" id="GO:0002098">
    <property type="term" value="P:tRNA wobble uridine modification"/>
    <property type="evidence" value="ECO:0000250"/>
    <property type="project" value="UniProtKB"/>
</dbReference>
<dbReference type="CDD" id="cd01335">
    <property type="entry name" value="Radical_SAM"/>
    <property type="match status" value="1"/>
</dbReference>
<dbReference type="FunFam" id="3.40.630.30:FF:000003">
    <property type="entry name" value="Elongator complex protein 3"/>
    <property type="match status" value="1"/>
</dbReference>
<dbReference type="Gene3D" id="3.40.630.30">
    <property type="match status" value="1"/>
</dbReference>
<dbReference type="InterPro" id="IPR016181">
    <property type="entry name" value="Acyl_CoA_acyltransferase"/>
</dbReference>
<dbReference type="InterPro" id="IPR039661">
    <property type="entry name" value="ELP3"/>
</dbReference>
<dbReference type="InterPro" id="IPR034687">
    <property type="entry name" value="ELP3-like"/>
</dbReference>
<dbReference type="InterPro" id="IPR056591">
    <property type="entry name" value="ELP3-like_N"/>
</dbReference>
<dbReference type="InterPro" id="IPR006638">
    <property type="entry name" value="Elp3/MiaA/NifB-like_rSAM"/>
</dbReference>
<dbReference type="InterPro" id="IPR000182">
    <property type="entry name" value="GNAT_dom"/>
</dbReference>
<dbReference type="InterPro" id="IPR032432">
    <property type="entry name" value="Radical_SAM_C"/>
</dbReference>
<dbReference type="InterPro" id="IPR007197">
    <property type="entry name" value="rSAM"/>
</dbReference>
<dbReference type="NCBIfam" id="TIGR01211">
    <property type="entry name" value="ELP3"/>
    <property type="match status" value="1"/>
</dbReference>
<dbReference type="PANTHER" id="PTHR11135:SF0">
    <property type="entry name" value="ELONGATOR COMPLEX PROTEIN 3"/>
    <property type="match status" value="1"/>
</dbReference>
<dbReference type="PANTHER" id="PTHR11135">
    <property type="entry name" value="HISTONE ACETYLTRANSFERASE-RELATED"/>
    <property type="match status" value="1"/>
</dbReference>
<dbReference type="Pfam" id="PF23613">
    <property type="entry name" value="ELP3_N"/>
    <property type="match status" value="1"/>
</dbReference>
<dbReference type="Pfam" id="PF04055">
    <property type="entry name" value="Radical_SAM"/>
    <property type="match status" value="1"/>
</dbReference>
<dbReference type="Pfam" id="PF16199">
    <property type="entry name" value="Radical_SAM_C"/>
    <property type="match status" value="1"/>
</dbReference>
<dbReference type="PIRSF" id="PIRSF005669">
    <property type="entry name" value="Hist_AcTrfase_ELP3"/>
    <property type="match status" value="1"/>
</dbReference>
<dbReference type="SFLD" id="SFLDF00344">
    <property type="entry name" value="ELP3-like"/>
    <property type="match status" value="1"/>
</dbReference>
<dbReference type="SFLD" id="SFLDS00029">
    <property type="entry name" value="Radical_SAM"/>
    <property type="match status" value="1"/>
</dbReference>
<dbReference type="SMART" id="SM00729">
    <property type="entry name" value="Elp3"/>
    <property type="match status" value="1"/>
</dbReference>
<dbReference type="SUPFAM" id="SSF55729">
    <property type="entry name" value="Acyl-CoA N-acyltransferases (Nat)"/>
    <property type="match status" value="1"/>
</dbReference>
<dbReference type="SUPFAM" id="SSF102114">
    <property type="entry name" value="Radical SAM enzymes"/>
    <property type="match status" value="1"/>
</dbReference>
<dbReference type="PROSITE" id="PS51186">
    <property type="entry name" value="GNAT"/>
    <property type="match status" value="1"/>
</dbReference>
<dbReference type="PROSITE" id="PS51918">
    <property type="entry name" value="RADICAL_SAM"/>
    <property type="match status" value="1"/>
</dbReference>
<keyword id="KW-0004">4Fe-4S</keyword>
<keyword id="KW-0012">Acyltransferase</keyword>
<keyword id="KW-0963">Cytoplasm</keyword>
<keyword id="KW-0408">Iron</keyword>
<keyword id="KW-0411">Iron-sulfur</keyword>
<keyword id="KW-0479">Metal-binding</keyword>
<keyword id="KW-0539">Nucleus</keyword>
<keyword id="KW-1185">Reference proteome</keyword>
<keyword id="KW-0694">RNA-binding</keyword>
<keyword id="KW-0949">S-adenosyl-L-methionine</keyword>
<keyword id="KW-0808">Transferase</keyword>
<keyword id="KW-0819">tRNA processing</keyword>
<keyword id="KW-0820">tRNA-binding</keyword>
<accession>Q5ZHS1</accession>